<dbReference type="EMBL" id="AE017354">
    <property type="protein sequence ID" value="AAU28746.1"/>
    <property type="molecule type" value="Genomic_DNA"/>
</dbReference>
<dbReference type="RefSeq" id="WP_010948388.1">
    <property type="nucleotide sequence ID" value="NC_002942.5"/>
</dbReference>
<dbReference type="RefSeq" id="YP_096693.1">
    <property type="nucleotide sequence ID" value="NC_002942.5"/>
</dbReference>
<dbReference type="PDB" id="5X1E">
    <property type="method" value="X-ray"/>
    <property type="resolution" value="2.00 A"/>
    <property type="chains" value="B/E=2-149"/>
</dbReference>
<dbReference type="PDB" id="5X90">
    <property type="method" value="X-ray"/>
    <property type="resolution" value="2.80 A"/>
    <property type="chains" value="B=2-149, F=2-150"/>
</dbReference>
<dbReference type="PDB" id="5XNB">
    <property type="method" value="X-ray"/>
    <property type="resolution" value="2.59 A"/>
    <property type="chains" value="C/F/I/L/O/R=1-151"/>
</dbReference>
<dbReference type="PDB" id="7BWK">
    <property type="method" value="X-ray"/>
    <property type="resolution" value="2.80 A"/>
    <property type="chains" value="C/H=1-151"/>
</dbReference>
<dbReference type="PDBsum" id="5X1E"/>
<dbReference type="PDBsum" id="5X90"/>
<dbReference type="PDBsum" id="5XNB"/>
<dbReference type="PDBsum" id="7BWK"/>
<dbReference type="SMR" id="Q5ZS31"/>
<dbReference type="DIP" id="DIP-59159N"/>
<dbReference type="IntAct" id="Q5ZS31">
    <property type="interactions" value="1"/>
</dbReference>
<dbReference type="STRING" id="272624.lpg2688"/>
<dbReference type="TCDB" id="3.A.7.9.1">
    <property type="family name" value="the type iv (conjugal dna-protein transfer or virb) secretory pathway (ivsp) family"/>
</dbReference>
<dbReference type="PaxDb" id="272624-lpg2688"/>
<dbReference type="GeneID" id="57036688"/>
<dbReference type="KEGG" id="lpn:lpg2688"/>
<dbReference type="PATRIC" id="fig|272624.6.peg.2870"/>
<dbReference type="eggNOG" id="ENOG5033XTW">
    <property type="taxonomic scope" value="Bacteria"/>
</dbReference>
<dbReference type="HOGENOM" id="CLU_1746563_0_0_6"/>
<dbReference type="OrthoDB" id="5641173at2"/>
<dbReference type="Proteomes" id="UP000000609">
    <property type="component" value="Chromosome"/>
</dbReference>
<dbReference type="GO" id="GO:0005737">
    <property type="term" value="C:cytoplasm"/>
    <property type="evidence" value="ECO:0007669"/>
    <property type="project" value="UniProtKB-SubCell"/>
</dbReference>
<dbReference type="GO" id="GO:0015031">
    <property type="term" value="P:protein transport"/>
    <property type="evidence" value="ECO:0007669"/>
    <property type="project" value="UniProtKB-KW"/>
</dbReference>
<dbReference type="InterPro" id="IPR049919">
    <property type="entry name" value="IcmW"/>
</dbReference>
<dbReference type="NCBIfam" id="NF038222">
    <property type="entry name" value="IcmW_IVB"/>
    <property type="match status" value="1"/>
</dbReference>
<dbReference type="Pfam" id="PF23130">
    <property type="entry name" value="IcmW"/>
    <property type="match status" value="1"/>
</dbReference>
<feature type="chain" id="PRO_0000455596" description="Type 4 adapter protein IcmW">
    <location>
        <begin position="1"/>
        <end position="151"/>
    </location>
</feature>
<feature type="helix" evidence="20">
    <location>
        <begin position="6"/>
        <end position="14"/>
    </location>
</feature>
<feature type="strand" evidence="20">
    <location>
        <begin position="16"/>
        <end position="18"/>
    </location>
</feature>
<feature type="helix" evidence="20">
    <location>
        <begin position="20"/>
        <end position="29"/>
    </location>
</feature>
<feature type="helix" evidence="20">
    <location>
        <begin position="40"/>
        <end position="52"/>
    </location>
</feature>
<feature type="helix" evidence="21">
    <location>
        <begin position="53"/>
        <end position="55"/>
    </location>
</feature>
<feature type="strand" evidence="21">
    <location>
        <begin position="57"/>
        <end position="59"/>
    </location>
</feature>
<feature type="helix" evidence="20">
    <location>
        <begin position="61"/>
        <end position="63"/>
    </location>
</feature>
<feature type="helix" evidence="20">
    <location>
        <begin position="67"/>
        <end position="74"/>
    </location>
</feature>
<feature type="helix" evidence="20">
    <location>
        <begin position="79"/>
        <end position="90"/>
    </location>
</feature>
<feature type="helix" evidence="20">
    <location>
        <begin position="96"/>
        <end position="107"/>
    </location>
</feature>
<feature type="strand" evidence="20">
    <location>
        <begin position="110"/>
        <end position="113"/>
    </location>
</feature>
<feature type="helix" evidence="20">
    <location>
        <begin position="114"/>
        <end position="134"/>
    </location>
</feature>
<feature type="helix" evidence="20">
    <location>
        <begin position="137"/>
        <end position="147"/>
    </location>
</feature>
<gene>
    <name evidence="12" type="primary">icmW</name>
    <name evidence="15" type="ordered locus">lpg2688</name>
</gene>
<reference key="1">
    <citation type="journal article" date="2004" name="Science">
        <title>The genomic sequence of the accidental pathogen Legionella pneumophila.</title>
        <authorList>
            <person name="Chien M."/>
            <person name="Morozova I."/>
            <person name="Shi S."/>
            <person name="Sheng H."/>
            <person name="Chen J."/>
            <person name="Gomez S.M."/>
            <person name="Asamani G."/>
            <person name="Hill K."/>
            <person name="Nuara J."/>
            <person name="Feder M."/>
            <person name="Rineer J."/>
            <person name="Greenberg J.J."/>
            <person name="Steshenko V."/>
            <person name="Park S.H."/>
            <person name="Zhao B."/>
            <person name="Teplitskaya E."/>
            <person name="Edwards J.R."/>
            <person name="Pampou S."/>
            <person name="Georghiou A."/>
            <person name="Chou I.-C."/>
            <person name="Iannuccilli W."/>
            <person name="Ulz M.E."/>
            <person name="Kim D.H."/>
            <person name="Geringer-Sameth A."/>
            <person name="Goldsberry C."/>
            <person name="Morozov P."/>
            <person name="Fischer S.G."/>
            <person name="Segal G."/>
            <person name="Qu X."/>
            <person name="Rzhetsky A."/>
            <person name="Zhang P."/>
            <person name="Cayanis E."/>
            <person name="De Jong P.J."/>
            <person name="Ju J."/>
            <person name="Kalachikov S."/>
            <person name="Shuman H.A."/>
            <person name="Russo J.J."/>
        </authorList>
    </citation>
    <scope>NUCLEOTIDE SEQUENCE [LARGE SCALE GENOMIC DNA]</scope>
    <source>
        <strain>Philadelphia 1 / ATCC 33152 / DSM 7513</strain>
    </source>
</reference>
<reference key="2">
    <citation type="journal article" date="1999" name="Mol. Microbiol.">
        <title>Pore-forming activity is not sufficient for Legionella pneumophila phagosome trafficking and intracellular growth.</title>
        <authorList>
            <person name="Zuckman D.M."/>
            <person name="Hung J.B."/>
            <person name="Roy C.R."/>
        </authorList>
    </citation>
    <scope>FUNCTION</scope>
    <scope>SUBCELLULAR LOCATION</scope>
    <scope>DISRUPTION PHENOTYPE</scope>
    <source>
        <strain>Philadelphia 1 / Lp01</strain>
    </source>
</reference>
<reference key="3">
    <citation type="journal article" date="2000" name="Mol. Microbiol.">
        <title>Identification of Icm protein complexes that play distinct roles in the biogenesis of an organelle permissive for Legionella pneumophila intracellular growth.</title>
        <authorList>
            <person name="Coers J."/>
            <person name="Kagan J.C."/>
            <person name="Matthews M."/>
            <person name="Nagai H."/>
            <person name="Zuckman D.M."/>
            <person name="Roy C.R."/>
        </authorList>
    </citation>
    <scope>FUNCTION</scope>
    <scope>INTERACTION WITH ICMS</scope>
    <scope>DISRUPTION PHENOTYPE</scope>
    <source>
        <strain>Philadelphia 1 / Lp01</strain>
    </source>
</reference>
<reference key="4">
    <citation type="journal article" date="2005" name="Mol. Microbiol.">
        <title>The Legionella IcmS-IcmW protein complex is important for Dot/Icm-mediated protein translocation.</title>
        <authorList>
            <person name="Ninio S."/>
            <person name="Zuckman-Cholon D.M."/>
            <person name="Cambronne E.D."/>
            <person name="Roy C.R."/>
        </authorList>
    </citation>
    <scope>FUNCTION</scope>
    <scope>INTERACTION WITH ICMS AND EFFECTOR PROTEINS</scope>
    <scope>SUBCELLULAR LOCATION</scope>
    <scope>DISRUPTION PHENOTYPE</scope>
    <source>
        <strain>Philadelphia 1 / Lp01</strain>
    </source>
</reference>
<reference key="5">
    <citation type="journal article" date="2006" name="Mol. Microbiol.">
        <title>Identification of the core transmembrane complex of the Legionella Dot/Icm type IV secretion system.</title>
        <authorList>
            <person name="Vincent C.D."/>
            <person name="Friedman J.R."/>
            <person name="Jeong K.C."/>
            <person name="Buford E.C."/>
            <person name="Miller J.L."/>
            <person name="Vogel J.P."/>
        </authorList>
    </citation>
    <scope>FUNCTION</scope>
    <scope>SUBUNIT</scope>
    <scope>SUBCELLULAR LOCATION</scope>
    <scope>DISRUPTION PHENOTYPE</scope>
    <source>
        <strain>Philadelphia 1 / Lp02</strain>
    </source>
</reference>
<reference key="6">
    <citation type="journal article" date="2007" name="PLoS Pathog.">
        <title>The Legionella pneumophila IcmSW complex interacts with multiple Dot/Icm effectors to facilitate type IV translocation.</title>
        <authorList>
            <person name="Cambronne E.D."/>
            <person name="Roy C.R."/>
        </authorList>
    </citation>
    <scope>FUNCTION</scope>
    <scope>INTERACTION WITH EFFECTOR PROTEINS</scope>
    <scope>DISRUPTION PHENOTYPE</scope>
    <source>
        <strain>Philadelphia 1 / Lp01</strain>
    </source>
</reference>
<reference key="7">
    <citation type="journal article" date="2012" name="Mol. Microbiol.">
        <title>Identification of the DotL coupling protein subcomplex of the Legionella Dot/Icm type IV secretion system.</title>
        <authorList>
            <person name="Vincent C.D."/>
            <person name="Friedman J.R."/>
            <person name="Jeong K.C."/>
            <person name="Sutherland M.C."/>
            <person name="Vogel J.P."/>
        </authorList>
    </citation>
    <scope>FUNCTION</scope>
    <scope>SUBUNIT</scope>
    <scope>SUBCELLULAR LOCATION</scope>
    <source>
        <strain>Philadelphia 1 / Lp02</strain>
    </source>
</reference>
<reference key="8">
    <citation type="journal article" date="2012" name="PLoS Pathog.">
        <title>The Legionella IcmSW complex directly interacts with DotL to mediate translocation of adaptor-dependent substrates.</title>
        <authorList>
            <person name="Sutherland M.C."/>
            <person name="Nguyen T.L."/>
            <person name="Tseng V."/>
            <person name="Vogel J.P."/>
        </authorList>
    </citation>
    <scope>FUNCTION</scope>
    <scope>ACTIVITY REGULATION</scope>
    <scope>INTERACTION WITH DOTL</scope>
    <scope>SUBCELLULAR LOCATION</scope>
    <source>
        <strain>Philadelphia 1 / Lp02</strain>
    </source>
</reference>
<reference key="9">
    <citation type="journal article" date="2020" name="Nat. Commun.">
        <title>Mechanism of effector capture and delivery by the type IV secretion system from Legionella pneumophila.</title>
        <authorList>
            <person name="Meir A."/>
            <person name="Mace K."/>
            <person name="Lukoyanova N."/>
            <person name="Chetrit D."/>
            <person name="Hospenthal M.K."/>
            <person name="Redzej A."/>
            <person name="Roy C."/>
            <person name="Waksman G."/>
        </authorList>
    </citation>
    <scope>FUNCTION</scope>
    <scope>SUBUNIT</scope>
    <source>
        <strain>Philadelphia 1 / Lp01</strain>
    </source>
</reference>
<reference evidence="16 17" key="10">
    <citation type="journal article" date="2017" name="Nat. Microbiol.">
        <title>Architecture of the type IV coupling protein complex of Legionella pneumophila.</title>
        <authorList>
            <person name="Kwak M.J."/>
            <person name="Kim J.D."/>
            <person name="Kim H."/>
            <person name="Kim C."/>
            <person name="Bowman J.W."/>
            <person name="Kim S."/>
            <person name="Joo K."/>
            <person name="Lee J."/>
            <person name="Jin K.S."/>
            <person name="Kim Y.G."/>
            <person name="Lee N.K."/>
            <person name="Jung J.U."/>
            <person name="Oh B.H."/>
        </authorList>
    </citation>
    <scope>X-RAY CRYSTALLOGRAPHY (2.00 ANGSTROMS) OF 2-149 IN COMPLEXES WITH DOTL; ICMS AND LVGA</scope>
    <scope>SUBUNIT</scope>
    <source>
        <strain>Philadelphia 1 / ATCC 33152 / DSM 7513</strain>
    </source>
</reference>
<reference evidence="18" key="11">
    <citation type="journal article" date="2017" name="Proc. Natl. Acad. Sci. U.S.A.">
        <title>Structural insights into the roles of the IcmS-IcmW complex in the type IVb secretion system of Legionella pneumophila.</title>
        <authorList>
            <person name="Xu J."/>
            <person name="Xu D."/>
            <person name="Wan M."/>
            <person name="Yin L."/>
            <person name="Wang X."/>
            <person name="Wu L."/>
            <person name="Liu Y."/>
            <person name="Liu X."/>
            <person name="Zhou Y."/>
            <person name="Zhu Y."/>
        </authorList>
    </citation>
    <scope>X-RAY CRYSTALLOGRAPHY (2.59 ANGSTROMS) IN COMPLEX WITH DOTL AND ICMS</scope>
    <scope>SUBUNIT</scope>
    <scope>INTERACTION WITH LVGA</scope>
</reference>
<reference evidence="19" key="12">
    <citation type="journal article" date="2020" name="Nat. Commun.">
        <title>Structural basis for effector protein recognition by the Dot/Icm Type IVB coupling protein complex.</title>
        <authorList>
            <person name="Kim H."/>
            <person name="Kubori T."/>
            <person name="Yamazaki K."/>
            <person name="Kwak M.J."/>
            <person name="Park S.Y."/>
            <person name="Nagai H."/>
            <person name="Vogel J.P."/>
            <person name="Oh B.H."/>
        </authorList>
    </citation>
    <scope>X-RAY CRYSTALLOGRAPHY (2.80 ANGSTROMS) IN COMPLEX WITH DOTL; ICMS; LVGA AND VPDB</scope>
    <scope>SUBUNIT</scope>
</reference>
<organism>
    <name type="scientific">Legionella pneumophila subsp. pneumophila (strain Philadelphia 1 / ATCC 33152 / DSM 7513)</name>
    <dbReference type="NCBI Taxonomy" id="272624"/>
    <lineage>
        <taxon>Bacteria</taxon>
        <taxon>Pseudomonadati</taxon>
        <taxon>Pseudomonadota</taxon>
        <taxon>Gammaproteobacteria</taxon>
        <taxon>Legionellales</taxon>
        <taxon>Legionellaceae</taxon>
        <taxon>Legionella</taxon>
    </lineage>
</organism>
<evidence type="ECO:0000269" key="1">
    <source>
    </source>
</evidence>
<evidence type="ECO:0000269" key="2">
    <source>
    </source>
</evidence>
<evidence type="ECO:0000269" key="3">
    <source>
    </source>
</evidence>
<evidence type="ECO:0000269" key="4">
    <source>
    </source>
</evidence>
<evidence type="ECO:0000269" key="5">
    <source>
    </source>
</evidence>
<evidence type="ECO:0000269" key="6">
    <source>
    </source>
</evidence>
<evidence type="ECO:0000269" key="7">
    <source>
    </source>
</evidence>
<evidence type="ECO:0000269" key="8">
    <source>
    </source>
</evidence>
<evidence type="ECO:0000269" key="9">
    <source>
    </source>
</evidence>
<evidence type="ECO:0000269" key="10">
    <source>
    </source>
</evidence>
<evidence type="ECO:0000269" key="11">
    <source>
    </source>
</evidence>
<evidence type="ECO:0000303" key="12">
    <source>
    </source>
</evidence>
<evidence type="ECO:0000303" key="13">
    <source>
    </source>
</evidence>
<evidence type="ECO:0000305" key="14"/>
<evidence type="ECO:0000312" key="15">
    <source>
        <dbReference type="EMBL" id="AAU28746.1"/>
    </source>
</evidence>
<evidence type="ECO:0007744" key="16">
    <source>
        <dbReference type="PDB" id="5X1E"/>
    </source>
</evidence>
<evidence type="ECO:0007744" key="17">
    <source>
        <dbReference type="PDB" id="5X90"/>
    </source>
</evidence>
<evidence type="ECO:0007744" key="18">
    <source>
        <dbReference type="PDB" id="5XNB"/>
    </source>
</evidence>
<evidence type="ECO:0007744" key="19">
    <source>
        <dbReference type="PDB" id="7BWK"/>
    </source>
</evidence>
<evidence type="ECO:0007829" key="20">
    <source>
        <dbReference type="PDB" id="5X1E"/>
    </source>
</evidence>
<evidence type="ECO:0007829" key="21">
    <source>
        <dbReference type="PDB" id="5X90"/>
    </source>
</evidence>
<accession>Q5ZS31</accession>
<proteinExistence type="evidence at protein level"/>
<keyword id="KW-0002">3D-structure</keyword>
<keyword id="KW-0963">Cytoplasm</keyword>
<keyword id="KW-0653">Protein transport</keyword>
<keyword id="KW-1185">Reference proteome</keyword>
<keyword id="KW-0813">Transport</keyword>
<keyword id="KW-0843">Virulence</keyword>
<protein>
    <recommendedName>
        <fullName evidence="14">Type 4 adapter protein IcmW</fullName>
    </recommendedName>
    <alternativeName>
        <fullName evidence="14">Intracellular multiplication protein W</fullName>
    </alternativeName>
    <alternativeName>
        <fullName evidence="13">Secretion adapter protein IcmW</fullName>
    </alternativeName>
</protein>
<comment type="function">
    <text evidence="1 2 3 4 5 6 7 11">Component of the Dot/Icm type IVB secretion system (T4BSS), which is used to inject bacterial effector proteins into eukaryotic host cells (PubMed:15661013, PubMed:17040490, PubMed:18069892, PubMed:22694730, PubMed:32513920). Part of a subcomplex which recruits effector proteins and delivers them to the core transmembrane subcomplex (PubMed:23028312, PubMed:32513920). The IcmS/IcmW protein complex plays an important role in protein translocation by interacting with multiple Dot/Icm effector proteins to facilitate their translocation into host cells (PubMed:15661013, PubMed:18069892). Interaction promotes conformational changes in the effector protein, which may facilitate display of a C-terminal translocation signal (PubMed:18069892). May maintain the substrates in a translocation competent form (PubMed:23028312). Required for intracellular growth in host cells, replicative phagosome formation and phagosome trafficking (PubMed:10361301, PubMed:11115108).</text>
</comment>
<comment type="activity regulation">
    <text evidence="7">Interaction with DotL is critical for the export of IcmSW-dependent substrates.</text>
</comment>
<comment type="subunit">
    <text evidence="2 3 4 5 6 7 8 9 10 11">The T4BSS is a complex nanomachine composed of several subcomplexes. This subunit is part of the Type IV Coupling Complex (T4CC), a subcomplex composed of the DotLMNYZ core and the IcmSW-LvgA adapter subunits, linked by the C-terminal tail of DotL (PubMed:17040490, PubMed:22694730, PubMed:28714967, PubMed:32457311, PubMed:32513920). Interacts with IcmS (PubMed:11115108, PubMed:15661013, PubMed:29203674). IcmS and IcmW form a stable complex (PubMed:15661013). Interaction with IcmS greatly enhances the stability of IcmW (PubMed:15661013, PubMed:29203674). Interacts directly with the type 4 coupling protein DotL (PubMed:23028312, PubMed:29203674, PubMed:32513920). Interacts with LvgA (PubMed:29203674). Interacts with effector proteins (PubMed:15661013, PubMed:18069892, PubMed:29203674).</text>
</comment>
<comment type="subcellular location">
    <subcellularLocation>
        <location evidence="1 3 4">Cytoplasm</location>
    </subcellularLocation>
    <text evidence="6 7">Associates with the inner membrane at the poles in a DotL/DotM/DotN-dependent manner.</text>
</comment>
<comment type="disruption phenotype">
    <text evidence="1 2 3 4 5">Deletion of the gene leads to a strong decrease in intracellular growth in human monocytes (PubMed:10361301, PubMed:11115108). Mutant is unable to evade phagosome lysosome fusion, but retains the pore-forming activity (PubMed:10361301, PubMed:11115108). Mutation severely impairs the translocation into host cells of multiple effector proteins, including SidA, SidB, SidC, SidD, SidE, SidG, SidH, WipA and WipB (PubMed:15661013, PubMed:18069892). Loss of this gene has an effect on the levels of IcmS (PubMed:17040490).</text>
</comment>
<sequence>MPDLSHEASAKYWFEYLDPMIYRVITFMESVENWTLDGNPELEEAMKQLGQELDDIEKIDLGLLAEEDKFIRIVGNIKSGRGLRLLQAIDTVHPGSASRVLIHAEETSLSSSDPAGFFLKRNIVFERLRLLSRVFCQYRLKLVLRALEGDE</sequence>
<name>ICMW_LEGPH</name>